<comment type="function">
    <text evidence="1">Protease inhibitor that may play a role in the regulation of protease activities during hematopoiesis and apoptosis induced by TNF. May regulate protease activities in the cytoplasm and in the nucleus (By similarity).</text>
</comment>
<comment type="subcellular location">
    <subcellularLocation>
        <location evidence="1">Nucleus</location>
    </subcellularLocation>
    <subcellularLocation>
        <location evidence="1">Cytoplasm</location>
    </subcellularLocation>
</comment>
<comment type="similarity">
    <text evidence="2">Belongs to the serpin family. Ov-serpin subfamily.</text>
</comment>
<feature type="chain" id="PRO_0000094115" description="Serpin B10">
    <location>
        <begin position="1"/>
        <end position="397"/>
    </location>
</feature>
<feature type="short sequence motif" description="Nuclear localization signal" evidence="1">
    <location>
        <begin position="74"/>
        <end position="77"/>
    </location>
</feature>
<feature type="site" description="Reactive bond" evidence="1">
    <location>
        <begin position="362"/>
        <end position="363"/>
    </location>
</feature>
<keyword id="KW-0963">Cytoplasm</keyword>
<keyword id="KW-0539">Nucleus</keyword>
<keyword id="KW-0646">Protease inhibitor</keyword>
<keyword id="KW-1185">Reference proteome</keyword>
<keyword id="KW-0722">Serine protease inhibitor</keyword>
<accession>Q8K1K6</accession>
<protein>
    <recommendedName>
        <fullName>Serpin B10</fullName>
    </recommendedName>
</protein>
<sequence>MASLAVSINQFALEFSKKLAESAEGRNIFFSPWGISTALAMLYLGTKGTTADQMAQVLQFSSVEDFKSCPDSEKKRKMEFNSGKFEEIQSDFQTLAAEILKPGNSYVLKTANRIYGEKTYPFHNKYLEDMKTYFGAEPQSVNFVEASGQIRKEINSWVGSQTGGKIPNLLPDDSVDTKTKMVLVNALYFKGTWEHQFSVKNTTERPFRVNKTTSKPVQMMSMKQSLQVFHIEELQTIGLQLHYQNRDLSLLLLLPEAIDGLEQLERAITYEKLDKWTSADMMDTYEVQLYLPKFKMEESYDLKSALRGMGMTDVFSQSKADFSNMTSERNLFLSNVFHKTFLEINEEGTEAAAGTGSEISVRIKAPSIELNVDHPFLFFIRHNKTKSILFCGRFCSP</sequence>
<reference key="1">
    <citation type="journal article" date="2004" name="Genome Res.">
        <title>The status, quality, and expansion of the NIH full-length cDNA project: the Mammalian Gene Collection (MGC).</title>
        <authorList>
            <consortium name="The MGC Project Team"/>
        </authorList>
    </citation>
    <scope>NUCLEOTIDE SEQUENCE [LARGE SCALE MRNA]</scope>
    <source>
        <strain>Czech II</strain>
        <tissue>Mammary tumor</tissue>
    </source>
</reference>
<proteinExistence type="evidence at transcript level"/>
<gene>
    <name type="primary">Serpinb10</name>
</gene>
<dbReference type="EMBL" id="BC029736">
    <property type="protein sequence ID" value="AAH29736.1"/>
    <property type="molecule type" value="mRNA"/>
</dbReference>
<dbReference type="EMBL" id="BC069938">
    <property type="protein sequence ID" value="AAH69938.1"/>
    <property type="molecule type" value="mRNA"/>
</dbReference>
<dbReference type="SMR" id="Q8K1K6"/>
<dbReference type="FunCoup" id="Q8K1K6">
    <property type="interactions" value="147"/>
</dbReference>
<dbReference type="MEROPS" id="I04.015"/>
<dbReference type="GlyGen" id="Q8K1K6">
    <property type="glycosylation" value="1 site, 1 O-linked glycan (1 site)"/>
</dbReference>
<dbReference type="iPTMnet" id="Q8K1K6"/>
<dbReference type="PhosphoSitePlus" id="Q8K1K6"/>
<dbReference type="PaxDb" id="10090-ENSMUSP00000138771"/>
<dbReference type="ProteomicsDB" id="257551"/>
<dbReference type="Pumba" id="Q8K1K6"/>
<dbReference type="AGR" id="MGI:2138648"/>
<dbReference type="MGI" id="MGI:2138648">
    <property type="gene designation" value="Serpinb10"/>
</dbReference>
<dbReference type="eggNOG" id="KOG2392">
    <property type="taxonomic scope" value="Eukaryota"/>
</dbReference>
<dbReference type="InParanoid" id="Q8K1K6"/>
<dbReference type="Reactome" id="R-MMU-6798695">
    <property type="pathway name" value="Neutrophil degranulation"/>
</dbReference>
<dbReference type="ChiTaRS" id="Serpinb10">
    <property type="organism name" value="mouse"/>
</dbReference>
<dbReference type="PRO" id="PR:Q8K1K6"/>
<dbReference type="Proteomes" id="UP000000589">
    <property type="component" value="Unplaced"/>
</dbReference>
<dbReference type="RNAct" id="Q8K1K6">
    <property type="molecule type" value="protein"/>
</dbReference>
<dbReference type="GO" id="GO:0005737">
    <property type="term" value="C:cytoplasm"/>
    <property type="evidence" value="ECO:0007669"/>
    <property type="project" value="UniProtKB-SubCell"/>
</dbReference>
<dbReference type="GO" id="GO:0005615">
    <property type="term" value="C:extracellular space"/>
    <property type="evidence" value="ECO:0007669"/>
    <property type="project" value="InterPro"/>
</dbReference>
<dbReference type="GO" id="GO:0005634">
    <property type="term" value="C:nucleus"/>
    <property type="evidence" value="ECO:0007669"/>
    <property type="project" value="UniProtKB-SubCell"/>
</dbReference>
<dbReference type="GO" id="GO:0004867">
    <property type="term" value="F:serine-type endopeptidase inhibitor activity"/>
    <property type="evidence" value="ECO:0007669"/>
    <property type="project" value="UniProtKB-KW"/>
</dbReference>
<dbReference type="CDD" id="cd19569">
    <property type="entry name" value="serpinB10_bomapin"/>
    <property type="match status" value="1"/>
</dbReference>
<dbReference type="FunFam" id="2.10.310.10:FF:000001">
    <property type="entry name" value="Serpin family A member 1"/>
    <property type="match status" value="1"/>
</dbReference>
<dbReference type="FunFam" id="3.30.497.10:FF:000004">
    <property type="entry name" value="Serpin family B member 1"/>
    <property type="match status" value="1"/>
</dbReference>
<dbReference type="FunFam" id="2.30.39.10:FF:000001">
    <property type="entry name" value="Serpin family B member 2"/>
    <property type="match status" value="1"/>
</dbReference>
<dbReference type="Gene3D" id="2.30.39.10">
    <property type="entry name" value="Alpha-1-antitrypsin, domain 1"/>
    <property type="match status" value="1"/>
</dbReference>
<dbReference type="Gene3D" id="3.30.497.10">
    <property type="entry name" value="Antithrombin, subunit I, domain 2"/>
    <property type="match status" value="1"/>
</dbReference>
<dbReference type="InterPro" id="IPR023795">
    <property type="entry name" value="Serpin_CS"/>
</dbReference>
<dbReference type="InterPro" id="IPR023796">
    <property type="entry name" value="Serpin_dom"/>
</dbReference>
<dbReference type="InterPro" id="IPR000215">
    <property type="entry name" value="Serpin_fam"/>
</dbReference>
<dbReference type="InterPro" id="IPR036186">
    <property type="entry name" value="Serpin_sf"/>
</dbReference>
<dbReference type="InterPro" id="IPR042178">
    <property type="entry name" value="Serpin_sf_1"/>
</dbReference>
<dbReference type="InterPro" id="IPR042185">
    <property type="entry name" value="Serpin_sf_2"/>
</dbReference>
<dbReference type="PANTHER" id="PTHR11461">
    <property type="entry name" value="SERINE PROTEASE INHIBITOR, SERPIN"/>
    <property type="match status" value="1"/>
</dbReference>
<dbReference type="PANTHER" id="PTHR11461:SF175">
    <property type="entry name" value="SERPIN B10"/>
    <property type="match status" value="1"/>
</dbReference>
<dbReference type="Pfam" id="PF00079">
    <property type="entry name" value="Serpin"/>
    <property type="match status" value="1"/>
</dbReference>
<dbReference type="SMART" id="SM00093">
    <property type="entry name" value="SERPIN"/>
    <property type="match status" value="1"/>
</dbReference>
<dbReference type="SUPFAM" id="SSF56574">
    <property type="entry name" value="Serpins"/>
    <property type="match status" value="1"/>
</dbReference>
<dbReference type="PROSITE" id="PS00284">
    <property type="entry name" value="SERPIN"/>
    <property type="match status" value="1"/>
</dbReference>
<name>SPB10_MOUSE</name>
<organism>
    <name type="scientific">Mus musculus</name>
    <name type="common">Mouse</name>
    <dbReference type="NCBI Taxonomy" id="10090"/>
    <lineage>
        <taxon>Eukaryota</taxon>
        <taxon>Metazoa</taxon>
        <taxon>Chordata</taxon>
        <taxon>Craniata</taxon>
        <taxon>Vertebrata</taxon>
        <taxon>Euteleostomi</taxon>
        <taxon>Mammalia</taxon>
        <taxon>Eutheria</taxon>
        <taxon>Euarchontoglires</taxon>
        <taxon>Glires</taxon>
        <taxon>Rodentia</taxon>
        <taxon>Myomorpha</taxon>
        <taxon>Muroidea</taxon>
        <taxon>Muridae</taxon>
        <taxon>Murinae</taxon>
        <taxon>Mus</taxon>
        <taxon>Mus</taxon>
    </lineage>
</organism>
<evidence type="ECO:0000250" key="1"/>
<evidence type="ECO:0000305" key="2"/>